<proteinExistence type="inferred from homology"/>
<feature type="chain" id="PRO_0000190698" description="UPF0758 protein ECA0145">
    <location>
        <begin position="1"/>
        <end position="221"/>
    </location>
</feature>
<feature type="domain" description="MPN" evidence="2">
    <location>
        <begin position="99"/>
        <end position="221"/>
    </location>
</feature>
<feature type="short sequence motif" description="JAMM motif" evidence="2">
    <location>
        <begin position="170"/>
        <end position="183"/>
    </location>
</feature>
<feature type="binding site" evidence="2">
    <location>
        <position position="170"/>
    </location>
    <ligand>
        <name>Zn(2+)</name>
        <dbReference type="ChEBI" id="CHEBI:29105"/>
        <note>catalytic</note>
    </ligand>
</feature>
<feature type="binding site" evidence="2">
    <location>
        <position position="172"/>
    </location>
    <ligand>
        <name>Zn(2+)</name>
        <dbReference type="ChEBI" id="CHEBI:29105"/>
        <note>catalytic</note>
    </ligand>
</feature>
<feature type="binding site" evidence="2">
    <location>
        <position position="183"/>
    </location>
    <ligand>
        <name>Zn(2+)</name>
        <dbReference type="ChEBI" id="CHEBI:29105"/>
        <note>catalytic</note>
    </ligand>
</feature>
<sequence length="221" mass="24776">MGWEKGLAPREKLVRLGAESLTDAELLAIFLRTGLPGVHVMQLAENLLAQFGSLYQLMTAEQSAFHNARGVGISKYTQIKAIAELSRRLFFSRLAKEDAMLNPEATGQYLQLLLSRREREVFLVLFLDNQHHVIRHQEMFVGTINSVEVHPREIVREALKANAAALILAHNHPSGKAEPSQADRAITEQIVKACLLLEIRVLDHLVIGHGEFVSFAERGWI</sequence>
<reference key="1">
    <citation type="journal article" date="2004" name="Proc. Natl. Acad. Sci. U.S.A.">
        <title>Genome sequence of the enterobacterial phytopathogen Erwinia carotovora subsp. atroseptica and characterization of virulence factors.</title>
        <authorList>
            <person name="Bell K.S."/>
            <person name="Sebaihia M."/>
            <person name="Pritchard L."/>
            <person name="Holden M.T.G."/>
            <person name="Hyman L.J."/>
            <person name="Holeva M.C."/>
            <person name="Thomson N.R."/>
            <person name="Bentley S.D."/>
            <person name="Churcher L.J.C."/>
            <person name="Mungall K."/>
            <person name="Atkin R."/>
            <person name="Bason N."/>
            <person name="Brooks K."/>
            <person name="Chillingworth T."/>
            <person name="Clark K."/>
            <person name="Doggett J."/>
            <person name="Fraser A."/>
            <person name="Hance Z."/>
            <person name="Hauser H."/>
            <person name="Jagels K."/>
            <person name="Moule S."/>
            <person name="Norbertczak H."/>
            <person name="Ormond D."/>
            <person name="Price C."/>
            <person name="Quail M.A."/>
            <person name="Sanders M."/>
            <person name="Walker D."/>
            <person name="Whitehead S."/>
            <person name="Salmond G.P.C."/>
            <person name="Birch P.R.J."/>
            <person name="Parkhill J."/>
            <person name="Toth I.K."/>
        </authorList>
    </citation>
    <scope>NUCLEOTIDE SEQUENCE [LARGE SCALE GENOMIC DNA]</scope>
    <source>
        <strain>SCRI 1043 / ATCC BAA-672</strain>
    </source>
</reference>
<accession>Q6DAV7</accession>
<keyword id="KW-0378">Hydrolase</keyword>
<keyword id="KW-0479">Metal-binding</keyword>
<keyword id="KW-0482">Metalloprotease</keyword>
<keyword id="KW-0645">Protease</keyword>
<keyword id="KW-1185">Reference proteome</keyword>
<keyword id="KW-0862">Zinc</keyword>
<name>Y145_PECAS</name>
<evidence type="ECO:0000255" key="1">
    <source>
        <dbReference type="HAMAP-Rule" id="MF_00018"/>
    </source>
</evidence>
<evidence type="ECO:0000255" key="2">
    <source>
        <dbReference type="PROSITE-ProRule" id="PRU01182"/>
    </source>
</evidence>
<dbReference type="EMBL" id="BX950851">
    <property type="protein sequence ID" value="CAG73065.1"/>
    <property type="molecule type" value="Genomic_DNA"/>
</dbReference>
<dbReference type="SMR" id="Q6DAV7"/>
<dbReference type="STRING" id="218491.ECA0145"/>
<dbReference type="KEGG" id="eca:ECA0145"/>
<dbReference type="PATRIC" id="fig|218491.5.peg.147"/>
<dbReference type="eggNOG" id="COG2003">
    <property type="taxonomic scope" value="Bacteria"/>
</dbReference>
<dbReference type="HOGENOM" id="CLU_073529_0_1_6"/>
<dbReference type="OrthoDB" id="9804482at2"/>
<dbReference type="Proteomes" id="UP000007966">
    <property type="component" value="Chromosome"/>
</dbReference>
<dbReference type="GO" id="GO:0046872">
    <property type="term" value="F:metal ion binding"/>
    <property type="evidence" value="ECO:0007669"/>
    <property type="project" value="UniProtKB-KW"/>
</dbReference>
<dbReference type="GO" id="GO:0008237">
    <property type="term" value="F:metallopeptidase activity"/>
    <property type="evidence" value="ECO:0007669"/>
    <property type="project" value="UniProtKB-KW"/>
</dbReference>
<dbReference type="GO" id="GO:0006508">
    <property type="term" value="P:proteolysis"/>
    <property type="evidence" value="ECO:0007669"/>
    <property type="project" value="UniProtKB-KW"/>
</dbReference>
<dbReference type="CDD" id="cd08071">
    <property type="entry name" value="MPN_DUF2466"/>
    <property type="match status" value="1"/>
</dbReference>
<dbReference type="Gene3D" id="3.40.140.10">
    <property type="entry name" value="Cytidine Deaminase, domain 2"/>
    <property type="match status" value="1"/>
</dbReference>
<dbReference type="HAMAP" id="MF_00018">
    <property type="entry name" value="UPF0758_YicR"/>
    <property type="match status" value="1"/>
</dbReference>
<dbReference type="InterPro" id="IPR037518">
    <property type="entry name" value="MPN"/>
</dbReference>
<dbReference type="InterPro" id="IPR025657">
    <property type="entry name" value="RadC_JAB"/>
</dbReference>
<dbReference type="InterPro" id="IPR010994">
    <property type="entry name" value="RuvA_2-like"/>
</dbReference>
<dbReference type="InterPro" id="IPR001405">
    <property type="entry name" value="UPF0758"/>
</dbReference>
<dbReference type="InterPro" id="IPR020891">
    <property type="entry name" value="UPF0758_CS"/>
</dbReference>
<dbReference type="InterPro" id="IPR046778">
    <property type="entry name" value="UPF0758_N"/>
</dbReference>
<dbReference type="InterPro" id="IPR022820">
    <property type="entry name" value="UPF0758_YicR"/>
</dbReference>
<dbReference type="NCBIfam" id="NF000642">
    <property type="entry name" value="PRK00024.1"/>
    <property type="match status" value="1"/>
</dbReference>
<dbReference type="NCBIfam" id="TIGR00608">
    <property type="entry name" value="radc"/>
    <property type="match status" value="1"/>
</dbReference>
<dbReference type="PANTHER" id="PTHR30471">
    <property type="entry name" value="DNA REPAIR PROTEIN RADC"/>
    <property type="match status" value="1"/>
</dbReference>
<dbReference type="PANTHER" id="PTHR30471:SF3">
    <property type="entry name" value="UPF0758 PROTEIN YEES-RELATED"/>
    <property type="match status" value="1"/>
</dbReference>
<dbReference type="Pfam" id="PF04002">
    <property type="entry name" value="RadC"/>
    <property type="match status" value="1"/>
</dbReference>
<dbReference type="Pfam" id="PF20582">
    <property type="entry name" value="UPF0758_N"/>
    <property type="match status" value="1"/>
</dbReference>
<dbReference type="SUPFAM" id="SSF102712">
    <property type="entry name" value="JAB1/MPN domain"/>
    <property type="match status" value="1"/>
</dbReference>
<dbReference type="SUPFAM" id="SSF47781">
    <property type="entry name" value="RuvA domain 2-like"/>
    <property type="match status" value="1"/>
</dbReference>
<dbReference type="PROSITE" id="PS50249">
    <property type="entry name" value="MPN"/>
    <property type="match status" value="1"/>
</dbReference>
<dbReference type="PROSITE" id="PS01302">
    <property type="entry name" value="UPF0758"/>
    <property type="match status" value="1"/>
</dbReference>
<protein>
    <recommendedName>
        <fullName evidence="1">UPF0758 protein ECA0145</fullName>
    </recommendedName>
</protein>
<gene>
    <name type="ordered locus">ECA0145</name>
</gene>
<comment type="similarity">
    <text evidence="1">Belongs to the UPF0758 family. YicR subfamily.</text>
</comment>
<organism>
    <name type="scientific">Pectobacterium atrosepticum (strain SCRI 1043 / ATCC BAA-672)</name>
    <name type="common">Erwinia carotovora subsp. atroseptica</name>
    <dbReference type="NCBI Taxonomy" id="218491"/>
    <lineage>
        <taxon>Bacteria</taxon>
        <taxon>Pseudomonadati</taxon>
        <taxon>Pseudomonadota</taxon>
        <taxon>Gammaproteobacteria</taxon>
        <taxon>Enterobacterales</taxon>
        <taxon>Pectobacteriaceae</taxon>
        <taxon>Pectobacterium</taxon>
    </lineage>
</organism>